<accession>B9KBC5</accession>
<name>MIAA_THENN</name>
<proteinExistence type="inferred from homology"/>
<keyword id="KW-0067">ATP-binding</keyword>
<keyword id="KW-0460">Magnesium</keyword>
<keyword id="KW-0547">Nucleotide-binding</keyword>
<keyword id="KW-0808">Transferase</keyword>
<keyword id="KW-0819">tRNA processing</keyword>
<dbReference type="EC" id="2.5.1.75" evidence="1"/>
<dbReference type="EMBL" id="CP000916">
    <property type="protein sequence ID" value="ACM22321.1"/>
    <property type="molecule type" value="Genomic_DNA"/>
</dbReference>
<dbReference type="RefSeq" id="WP_012645031.1">
    <property type="nucleotide sequence ID" value="NC_011978.1"/>
</dbReference>
<dbReference type="SMR" id="B9KBC5"/>
<dbReference type="STRING" id="309803.CTN_0145"/>
<dbReference type="KEGG" id="tna:CTN_0145"/>
<dbReference type="eggNOG" id="COG0324">
    <property type="taxonomic scope" value="Bacteria"/>
</dbReference>
<dbReference type="HOGENOM" id="CLU_032616_0_1_0"/>
<dbReference type="Proteomes" id="UP000000445">
    <property type="component" value="Chromosome"/>
</dbReference>
<dbReference type="GO" id="GO:0005524">
    <property type="term" value="F:ATP binding"/>
    <property type="evidence" value="ECO:0007669"/>
    <property type="project" value="UniProtKB-UniRule"/>
</dbReference>
<dbReference type="GO" id="GO:0052381">
    <property type="term" value="F:tRNA dimethylallyltransferase activity"/>
    <property type="evidence" value="ECO:0007669"/>
    <property type="project" value="UniProtKB-UniRule"/>
</dbReference>
<dbReference type="GO" id="GO:0006400">
    <property type="term" value="P:tRNA modification"/>
    <property type="evidence" value="ECO:0007669"/>
    <property type="project" value="TreeGrafter"/>
</dbReference>
<dbReference type="FunFam" id="1.10.20.140:FF:000001">
    <property type="entry name" value="tRNA dimethylallyltransferase"/>
    <property type="match status" value="1"/>
</dbReference>
<dbReference type="Gene3D" id="1.10.20.140">
    <property type="match status" value="1"/>
</dbReference>
<dbReference type="Gene3D" id="3.40.50.300">
    <property type="entry name" value="P-loop containing nucleotide triphosphate hydrolases"/>
    <property type="match status" value="1"/>
</dbReference>
<dbReference type="HAMAP" id="MF_00185">
    <property type="entry name" value="IPP_trans"/>
    <property type="match status" value="1"/>
</dbReference>
<dbReference type="InterPro" id="IPR039657">
    <property type="entry name" value="Dimethylallyltransferase"/>
</dbReference>
<dbReference type="InterPro" id="IPR018022">
    <property type="entry name" value="IPT"/>
</dbReference>
<dbReference type="InterPro" id="IPR027417">
    <property type="entry name" value="P-loop_NTPase"/>
</dbReference>
<dbReference type="NCBIfam" id="TIGR00174">
    <property type="entry name" value="miaA"/>
    <property type="match status" value="1"/>
</dbReference>
<dbReference type="PANTHER" id="PTHR11088">
    <property type="entry name" value="TRNA DIMETHYLALLYLTRANSFERASE"/>
    <property type="match status" value="1"/>
</dbReference>
<dbReference type="PANTHER" id="PTHR11088:SF60">
    <property type="entry name" value="TRNA DIMETHYLALLYLTRANSFERASE"/>
    <property type="match status" value="1"/>
</dbReference>
<dbReference type="Pfam" id="PF01715">
    <property type="entry name" value="IPPT"/>
    <property type="match status" value="1"/>
</dbReference>
<dbReference type="SUPFAM" id="SSF52540">
    <property type="entry name" value="P-loop containing nucleoside triphosphate hydrolases"/>
    <property type="match status" value="1"/>
</dbReference>
<gene>
    <name evidence="1" type="primary">miaA</name>
    <name type="ordered locus">CTN_0145</name>
</gene>
<organism>
    <name type="scientific">Thermotoga neapolitana (strain ATCC 49049 / DSM 4359 / NBRC 107923 / NS-E)</name>
    <dbReference type="NCBI Taxonomy" id="309803"/>
    <lineage>
        <taxon>Bacteria</taxon>
        <taxon>Thermotogati</taxon>
        <taxon>Thermotogota</taxon>
        <taxon>Thermotogae</taxon>
        <taxon>Thermotogales</taxon>
        <taxon>Thermotogaceae</taxon>
        <taxon>Thermotoga</taxon>
    </lineage>
</organism>
<sequence>MKMAIVGGPTAVGKTDLMVEVCEEINAEIVSMDSRQIYRYMDIGTAKPTPEQRKRVPHHMIDILDPDEYYNAFLYRKDSLKAVEDILKRGKIPVYVGGTGLYADALVRGIFEGVPADENIRKELRELERREPGILRKMLEEFDPEAATRIHPNDLKRTIRALEVYMKTGRRISELQKETKGDDRFFIIVLTRERYDLYDRINRRVDRMVEMGLVDEVKRLLSMGYSKDLNSMKTIGYKEVIEYLEGKYDFEKMVHLIKRNTRHFARRQIIWFKRYENAIWYNLTFVSKEELKKTLKELIVKNFSV</sequence>
<protein>
    <recommendedName>
        <fullName evidence="1">tRNA dimethylallyltransferase</fullName>
        <ecNumber evidence="1">2.5.1.75</ecNumber>
    </recommendedName>
    <alternativeName>
        <fullName evidence="1">Dimethylallyl diphosphate:tRNA dimethylallyltransferase</fullName>
        <shortName evidence="1">DMAPP:tRNA dimethylallyltransferase</shortName>
        <shortName evidence="1">DMATase</shortName>
    </alternativeName>
    <alternativeName>
        <fullName evidence="1">Isopentenyl-diphosphate:tRNA isopentenyltransferase</fullName>
        <shortName evidence="1">IPP transferase</shortName>
        <shortName evidence="1">IPPT</shortName>
        <shortName evidence="1">IPTase</shortName>
    </alternativeName>
</protein>
<feature type="chain" id="PRO_0000377356" description="tRNA dimethylallyltransferase">
    <location>
        <begin position="1"/>
        <end position="305"/>
    </location>
</feature>
<feature type="region of interest" description="Interaction with substrate tRNA" evidence="1">
    <location>
        <begin position="33"/>
        <end position="36"/>
    </location>
</feature>
<feature type="binding site" evidence="1">
    <location>
        <begin position="8"/>
        <end position="15"/>
    </location>
    <ligand>
        <name>ATP</name>
        <dbReference type="ChEBI" id="CHEBI:30616"/>
    </ligand>
</feature>
<feature type="binding site" evidence="1">
    <location>
        <begin position="10"/>
        <end position="15"/>
    </location>
    <ligand>
        <name>substrate</name>
    </ligand>
</feature>
<feature type="site" description="Interaction with substrate tRNA" evidence="1">
    <location>
        <position position="99"/>
    </location>
</feature>
<feature type="site" description="Interaction with substrate tRNA" evidence="1">
    <location>
        <position position="121"/>
    </location>
</feature>
<comment type="function">
    <text evidence="1">Catalyzes the transfer of a dimethylallyl group onto the adenine at position 37 in tRNAs that read codons beginning with uridine, leading to the formation of N6-(dimethylallyl)adenosine (i(6)A).</text>
</comment>
<comment type="catalytic activity">
    <reaction evidence="1">
        <text>adenosine(37) in tRNA + dimethylallyl diphosphate = N(6)-dimethylallyladenosine(37) in tRNA + diphosphate</text>
        <dbReference type="Rhea" id="RHEA:26482"/>
        <dbReference type="Rhea" id="RHEA-COMP:10162"/>
        <dbReference type="Rhea" id="RHEA-COMP:10375"/>
        <dbReference type="ChEBI" id="CHEBI:33019"/>
        <dbReference type="ChEBI" id="CHEBI:57623"/>
        <dbReference type="ChEBI" id="CHEBI:74411"/>
        <dbReference type="ChEBI" id="CHEBI:74415"/>
        <dbReference type="EC" id="2.5.1.75"/>
    </reaction>
</comment>
<comment type="cofactor">
    <cofactor evidence="1">
        <name>Mg(2+)</name>
        <dbReference type="ChEBI" id="CHEBI:18420"/>
    </cofactor>
</comment>
<comment type="subunit">
    <text evidence="1">Monomer.</text>
</comment>
<comment type="similarity">
    <text evidence="1">Belongs to the IPP transferase family.</text>
</comment>
<reference key="1">
    <citation type="submission" date="2007-11" db="EMBL/GenBank/DDBJ databases">
        <title>The genome sequence of the hyperthermophilic bacterium Thermotoga neapolitana.</title>
        <authorList>
            <person name="Lim S.K."/>
            <person name="Kim J.S."/>
            <person name="Cha S.H."/>
            <person name="Park B.C."/>
            <person name="Lee D.S."/>
            <person name="Tae H.S."/>
            <person name="Kim S.-J."/>
            <person name="Kim J.J."/>
            <person name="Park K.J."/>
            <person name="Lee S.Y."/>
        </authorList>
    </citation>
    <scope>NUCLEOTIDE SEQUENCE [LARGE SCALE GENOMIC DNA]</scope>
    <source>
        <strain>ATCC 49049 / DSM 4359 / NBRC 107923 / NS-E</strain>
    </source>
</reference>
<evidence type="ECO:0000255" key="1">
    <source>
        <dbReference type="HAMAP-Rule" id="MF_00185"/>
    </source>
</evidence>